<reference key="1">
    <citation type="journal article" date="1988" name="FEBS Lett.">
        <title>The complete amino acid sequence of the ribosomal A protein (L12) from the archaebacterium Sulfolobus acidocaldarius.</title>
        <authorList>
            <person name="Matheson A.T."/>
            <person name="Louie K.A."/>
            <person name="Boeck A."/>
        </authorList>
    </citation>
    <scope>PROTEIN SEQUENCE</scope>
    <source>
        <strain>ATCC 33909 / DSM 639 / JCM 8929 / NBRC 15157 / NCIMB 11770</strain>
    </source>
</reference>
<reference key="2">
    <citation type="journal article" date="1994" name="J. Mol. Biol.">
        <title>Structure and transcription of the L11-L1-L10-L12 ribosomal protein gene operon from the extreme thermophilic archaeon Sulfolobus acidocaldarius.</title>
        <authorList>
            <person name="Ramirez C."/>
            <person name="Shimmin L.C."/>
            <person name="Leggatt P."/>
            <person name="Matheson A.T."/>
        </authorList>
    </citation>
    <scope>NUCLEOTIDE SEQUENCE [GENOMIC DNA]</scope>
</reference>
<reference key="3">
    <citation type="journal article" date="1989" name="Can. J. Microbiol.">
        <title>Structure and evolution of the L11, L1, L10, and L12 equivalent ribosomal proteins in eubacteria, archaebacteria, and eucaryotes.</title>
        <authorList>
            <person name="Ramirez C."/>
            <person name="Shimmin L.C."/>
            <person name="Newton C.H."/>
            <person name="Matheson A.T."/>
            <person name="Dennis P.P."/>
        </authorList>
    </citation>
    <scope>NUCLEOTIDE SEQUENCE [GENOMIC DNA]</scope>
</reference>
<reference key="4">
    <citation type="journal article" date="1989" name="Can. J. Microbiol.">
        <authorList>
            <person name="Ramirez C."/>
            <person name="Shimmin L.C."/>
            <person name="Newton C.H."/>
            <person name="Matheson A.T."/>
            <person name="Dennis P.P."/>
        </authorList>
    </citation>
    <scope>ERRATUM OF PUBMED:2497941</scope>
</reference>
<reference key="5">
    <citation type="journal article" date="2005" name="J. Bacteriol.">
        <title>The genome of Sulfolobus acidocaldarius, a model organism of the Crenarchaeota.</title>
        <authorList>
            <person name="Chen L."/>
            <person name="Bruegger K."/>
            <person name="Skovgaard M."/>
            <person name="Redder P."/>
            <person name="She Q."/>
            <person name="Torarinsson E."/>
            <person name="Greve B."/>
            <person name="Awayez M."/>
            <person name="Zibat A."/>
            <person name="Klenk H.-P."/>
            <person name="Garrett R.A."/>
        </authorList>
    </citation>
    <scope>NUCLEOTIDE SEQUENCE [LARGE SCALE GENOMIC DNA]</scope>
    <source>
        <strain>ATCC 33909 / DSM 639 / JCM 8929 / NBRC 15157 / NCIMB 11770</strain>
    </source>
</reference>
<comment type="function">
    <text evidence="1">Forms part of the ribosomal stalk, playing a central role in the interaction of the ribosome with GTP-bound translation factors.</text>
</comment>
<comment type="subunit">
    <text evidence="1">Part of the 50S ribosomal subunit. Homodimer, it forms part of the ribosomal stalk which helps the ribosome interact with GTP-bound translation factors. Forms a heptameric uL10/P0(P1)2(P1)2(P1)2 complex, where uL10/P0 forms an elongated spine to which the P1 dimers bind in a sequential fashion.</text>
</comment>
<comment type="similarity">
    <text evidence="1">Belongs to the eukaryotic ribosomal protein P1/P2 family.</text>
</comment>
<comment type="caution">
    <text evidence="4">Was originally thought to originate from S.solfataricus strain P1, but the culture was contaminated with S.acidocaldarius.</text>
</comment>
<organism>
    <name type="scientific">Sulfolobus acidocaldarius (strain ATCC 33909 / DSM 639 / JCM 8929 / NBRC 15157 / NCIMB 11770)</name>
    <dbReference type="NCBI Taxonomy" id="330779"/>
    <lineage>
        <taxon>Archaea</taxon>
        <taxon>Thermoproteota</taxon>
        <taxon>Thermoprotei</taxon>
        <taxon>Sulfolobales</taxon>
        <taxon>Sulfolobaceae</taxon>
        <taxon>Sulfolobus</taxon>
    </lineage>
</organism>
<feature type="chain" id="PRO_0000157636" description="Large ribosomal subunit protein P1">
    <location>
        <begin position="1"/>
        <end position="105"/>
    </location>
</feature>
<feature type="region of interest" description="Disordered" evidence="2">
    <location>
        <begin position="65"/>
        <end position="105"/>
    </location>
</feature>
<feature type="compositionally biased region" description="Low complexity" evidence="2">
    <location>
        <begin position="65"/>
        <end position="76"/>
    </location>
</feature>
<feature type="compositionally biased region" description="Basic and acidic residues" evidence="2">
    <location>
        <begin position="77"/>
        <end position="92"/>
    </location>
</feature>
<feature type="modified residue" description="Blocked amino end (Met)">
    <location>
        <position position="1"/>
    </location>
</feature>
<feature type="sequence conflict" description="In Ref. 1; AA sequence." evidence="3" ref="1">
    <original>K</original>
    <variation>E</variation>
    <location>
        <position position="46"/>
    </location>
</feature>
<proteinExistence type="evidence at protein level"/>
<sequence length="105" mass="11138">MEYIYASLLLHAAKKEISEENIKNVLSAAGITVDEVRLKAVAAALKEVNIDEILKTATAMPVAAVAAPAGQQTQQAAEKKEEKKEEEKKGPSEEEIGGGLSSLFG</sequence>
<accession>P08055</accession>
<accession>P35022</accession>
<accession>Q4J8V4</accession>
<dbReference type="EMBL" id="X59038">
    <property type="protein sequence ID" value="CAA41765.1"/>
    <property type="molecule type" value="Genomic_DNA"/>
</dbReference>
<dbReference type="EMBL" id="CP000077">
    <property type="protein sequence ID" value="AAY80777.1"/>
    <property type="molecule type" value="Genomic_DNA"/>
</dbReference>
<dbReference type="PIR" id="S53651">
    <property type="entry name" value="R5UC12"/>
</dbReference>
<dbReference type="RefSeq" id="WP_011278279.1">
    <property type="nucleotide sequence ID" value="NC_007181.1"/>
</dbReference>
<dbReference type="SMR" id="P08055"/>
<dbReference type="STRING" id="330779.Saci_1456"/>
<dbReference type="GeneID" id="14551951"/>
<dbReference type="KEGG" id="sai:Saci_1456"/>
<dbReference type="PATRIC" id="fig|330779.12.peg.1400"/>
<dbReference type="eggNOG" id="arCOG04287">
    <property type="taxonomic scope" value="Archaea"/>
</dbReference>
<dbReference type="HOGENOM" id="CLU_114656_2_0_2"/>
<dbReference type="Proteomes" id="UP000001018">
    <property type="component" value="Chromosome"/>
</dbReference>
<dbReference type="GO" id="GO:1990904">
    <property type="term" value="C:ribonucleoprotein complex"/>
    <property type="evidence" value="ECO:0007669"/>
    <property type="project" value="UniProtKB-KW"/>
</dbReference>
<dbReference type="GO" id="GO:0005840">
    <property type="term" value="C:ribosome"/>
    <property type="evidence" value="ECO:0007669"/>
    <property type="project" value="UniProtKB-KW"/>
</dbReference>
<dbReference type="GO" id="GO:0003735">
    <property type="term" value="F:structural constituent of ribosome"/>
    <property type="evidence" value="ECO:0007669"/>
    <property type="project" value="InterPro"/>
</dbReference>
<dbReference type="GO" id="GO:0006414">
    <property type="term" value="P:translational elongation"/>
    <property type="evidence" value="ECO:0007669"/>
    <property type="project" value="InterPro"/>
</dbReference>
<dbReference type="CDD" id="cd05832">
    <property type="entry name" value="Ribosomal_L12p"/>
    <property type="match status" value="1"/>
</dbReference>
<dbReference type="FunFam" id="1.10.10.1410:FF:000002">
    <property type="entry name" value="60S acidic ribosomal protein P2"/>
    <property type="match status" value="1"/>
</dbReference>
<dbReference type="Gene3D" id="1.10.10.1410">
    <property type="match status" value="1"/>
</dbReference>
<dbReference type="HAMAP" id="MF_01478">
    <property type="entry name" value="Ribosomal_L12_arch"/>
    <property type="match status" value="1"/>
</dbReference>
<dbReference type="InterPro" id="IPR038716">
    <property type="entry name" value="P1/P2_N_sf"/>
</dbReference>
<dbReference type="InterPro" id="IPR027534">
    <property type="entry name" value="Ribosomal_P1/P2"/>
</dbReference>
<dbReference type="InterPro" id="IPR022295">
    <property type="entry name" value="Ribosomal_P1_arc"/>
</dbReference>
<dbReference type="NCBIfam" id="TIGR03685">
    <property type="entry name" value="ribo_P1_arch"/>
    <property type="match status" value="1"/>
</dbReference>
<dbReference type="PANTHER" id="PTHR45696">
    <property type="entry name" value="60S ACIDIC RIBOSOMAL PROTEIN P1"/>
    <property type="match status" value="1"/>
</dbReference>
<dbReference type="PANTHER" id="PTHR45696:SF10">
    <property type="entry name" value="LARGE RIBOSOMAL SUBUNIT PROTEIN P1"/>
    <property type="match status" value="1"/>
</dbReference>
<dbReference type="Pfam" id="PF00428">
    <property type="entry name" value="Ribosomal_60s"/>
    <property type="match status" value="1"/>
</dbReference>
<keyword id="KW-0903">Direct protein sequencing</keyword>
<keyword id="KW-1185">Reference proteome</keyword>
<keyword id="KW-0687">Ribonucleoprotein</keyword>
<keyword id="KW-0689">Ribosomal protein</keyword>
<protein>
    <recommendedName>
        <fullName evidence="1">Large ribosomal subunit protein P1</fullName>
    </recommendedName>
    <alternativeName>
        <fullName evidence="1">50S ribosomal protein L12</fullName>
    </alternativeName>
    <alternativeName>
        <fullName>Ribosomal protein 'A'</fullName>
    </alternativeName>
</protein>
<name>RL12_SULAC</name>
<evidence type="ECO:0000255" key="1">
    <source>
        <dbReference type="HAMAP-Rule" id="MF_01478"/>
    </source>
</evidence>
<evidence type="ECO:0000256" key="2">
    <source>
        <dbReference type="SAM" id="MobiDB-lite"/>
    </source>
</evidence>
<evidence type="ECO:0000305" key="3"/>
<evidence type="ECO:0000305" key="4">
    <source>
    </source>
</evidence>
<gene>
    <name evidence="1" type="primary">rpl12</name>
    <name type="ordered locus">Saci_1456</name>
</gene>